<evidence type="ECO:0000250" key="1"/>
<evidence type="ECO:0000255" key="2">
    <source>
        <dbReference type="PROSITE-ProRule" id="PRU10001"/>
    </source>
</evidence>
<evidence type="ECO:0000305" key="3"/>
<dbReference type="EC" id="1.1.1.304"/>
<dbReference type="EMBL" id="AE015929">
    <property type="protein sequence ID" value="AAO03794.1"/>
    <property type="molecule type" value="Genomic_DNA"/>
</dbReference>
<dbReference type="RefSeq" id="NP_763752.1">
    <property type="nucleotide sequence ID" value="NC_004461.1"/>
</dbReference>
<dbReference type="RefSeq" id="WP_002469273.1">
    <property type="nucleotide sequence ID" value="NZ_WBME01000033.1"/>
</dbReference>
<dbReference type="SMR" id="Q8CQD2"/>
<dbReference type="KEGG" id="sep:SE_0197"/>
<dbReference type="PATRIC" id="fig|176280.10.peg.178"/>
<dbReference type="eggNOG" id="COG1028">
    <property type="taxonomic scope" value="Bacteria"/>
</dbReference>
<dbReference type="HOGENOM" id="CLU_010194_1_0_9"/>
<dbReference type="OrthoDB" id="9803333at2"/>
<dbReference type="Proteomes" id="UP000001411">
    <property type="component" value="Chromosome"/>
</dbReference>
<dbReference type="GO" id="GO:0052588">
    <property type="term" value="F:diacetyl reductase ((S)-acetoin forming) (NAD+) activity"/>
    <property type="evidence" value="ECO:0007669"/>
    <property type="project" value="UniProtKB-EC"/>
</dbReference>
<dbReference type="GO" id="GO:0048038">
    <property type="term" value="F:quinone binding"/>
    <property type="evidence" value="ECO:0007669"/>
    <property type="project" value="TreeGrafter"/>
</dbReference>
<dbReference type="GO" id="GO:0045150">
    <property type="term" value="P:acetoin catabolic process"/>
    <property type="evidence" value="ECO:0007669"/>
    <property type="project" value="InterPro"/>
</dbReference>
<dbReference type="GO" id="GO:0006633">
    <property type="term" value="P:fatty acid biosynthetic process"/>
    <property type="evidence" value="ECO:0007669"/>
    <property type="project" value="TreeGrafter"/>
</dbReference>
<dbReference type="CDD" id="cd05366">
    <property type="entry name" value="meso-BDH-like_SDR_c"/>
    <property type="match status" value="1"/>
</dbReference>
<dbReference type="FunFam" id="3.40.50.720:FF:000084">
    <property type="entry name" value="Short-chain dehydrogenase reductase"/>
    <property type="match status" value="1"/>
</dbReference>
<dbReference type="Gene3D" id="3.40.50.720">
    <property type="entry name" value="NAD(P)-binding Rossmann-like Domain"/>
    <property type="match status" value="1"/>
</dbReference>
<dbReference type="InterPro" id="IPR014007">
    <property type="entry name" value="23BDH"/>
</dbReference>
<dbReference type="InterPro" id="IPR036291">
    <property type="entry name" value="NAD(P)-bd_dom_sf"/>
</dbReference>
<dbReference type="InterPro" id="IPR020904">
    <property type="entry name" value="Sc_DH/Rdtase_CS"/>
</dbReference>
<dbReference type="InterPro" id="IPR002347">
    <property type="entry name" value="SDR_fam"/>
</dbReference>
<dbReference type="NCBIfam" id="TIGR02415">
    <property type="entry name" value="23BDH"/>
    <property type="match status" value="1"/>
</dbReference>
<dbReference type="NCBIfam" id="NF005559">
    <property type="entry name" value="PRK07231.1"/>
    <property type="match status" value="1"/>
</dbReference>
<dbReference type="PANTHER" id="PTHR42760:SF121">
    <property type="entry name" value="3-OXOACYL-(ACYL-CARRIER-PROTEIN) REDUCTASE"/>
    <property type="match status" value="1"/>
</dbReference>
<dbReference type="PANTHER" id="PTHR42760">
    <property type="entry name" value="SHORT-CHAIN DEHYDROGENASES/REDUCTASES FAMILY MEMBER"/>
    <property type="match status" value="1"/>
</dbReference>
<dbReference type="Pfam" id="PF00106">
    <property type="entry name" value="adh_short"/>
    <property type="match status" value="1"/>
</dbReference>
<dbReference type="PRINTS" id="PR00081">
    <property type="entry name" value="GDHRDH"/>
</dbReference>
<dbReference type="PRINTS" id="PR00080">
    <property type="entry name" value="SDRFAMILY"/>
</dbReference>
<dbReference type="SUPFAM" id="SSF51735">
    <property type="entry name" value="NAD(P)-binding Rossmann-fold domains"/>
    <property type="match status" value="1"/>
</dbReference>
<dbReference type="PROSITE" id="PS00061">
    <property type="entry name" value="ADH_SHORT"/>
    <property type="match status" value="1"/>
</dbReference>
<accession>Q8CQD2</accession>
<gene>
    <name type="primary">butA</name>
    <name type="ordered locus">SE_0197</name>
</gene>
<keyword id="KW-0520">NAD</keyword>
<keyword id="KW-0560">Oxidoreductase</keyword>
<comment type="function">
    <text evidence="1">Catalyzes the irreversible reduction of 2,3-butanediol to (S)-acetoin in the presence of NADH.</text>
</comment>
<comment type="catalytic activity">
    <reaction>
        <text>(S)-acetoin + NAD(+) = diacetyl + NADH + H(+)</text>
        <dbReference type="Rhea" id="RHEA:27286"/>
        <dbReference type="ChEBI" id="CHEBI:15378"/>
        <dbReference type="ChEBI" id="CHEBI:15687"/>
        <dbReference type="ChEBI" id="CHEBI:16583"/>
        <dbReference type="ChEBI" id="CHEBI:57540"/>
        <dbReference type="ChEBI" id="CHEBI:57945"/>
        <dbReference type="EC" id="1.1.1.304"/>
    </reaction>
</comment>
<comment type="similarity">
    <text evidence="3">Belongs to the short-chain dehydrogenases/reductases (SDR) family.</text>
</comment>
<protein>
    <recommendedName>
        <fullName>Diacetyl reductase [(S)-acetoin forming]</fullName>
        <ecNumber>1.1.1.304</ecNumber>
    </recommendedName>
    <alternativeName>
        <fullName>Acetoin(diacetyl) reductase</fullName>
        <shortName>AR</shortName>
    </alternativeName>
    <alternativeName>
        <fullName>Meso-2,3-butanediol dehydrogenase</fullName>
    </alternativeName>
</protein>
<reference key="1">
    <citation type="journal article" date="2003" name="Mol. Microbiol.">
        <title>Genome-based analysis of virulence genes in a non-biofilm-forming Staphylococcus epidermidis strain (ATCC 12228).</title>
        <authorList>
            <person name="Zhang Y.-Q."/>
            <person name="Ren S.-X."/>
            <person name="Li H.-L."/>
            <person name="Wang Y.-X."/>
            <person name="Fu G."/>
            <person name="Yang J."/>
            <person name="Qin Z.-Q."/>
            <person name="Miao Y.-G."/>
            <person name="Wang W.-Y."/>
            <person name="Chen R.-S."/>
            <person name="Shen Y."/>
            <person name="Chen Z."/>
            <person name="Yuan Z.-H."/>
            <person name="Zhao G.-P."/>
            <person name="Qu D."/>
            <person name="Danchin A."/>
            <person name="Wen Y.-M."/>
        </authorList>
    </citation>
    <scope>NUCLEOTIDE SEQUENCE [LARGE SCALE GENOMIC DNA]</scope>
    <source>
        <strain>ATCC 12228 / FDA PCI 1200</strain>
    </source>
</reference>
<proteinExistence type="inferred from homology"/>
<sequence length="257" mass="27917">MSKTAIITGAAGGLGKGIAERLANDGFNIVLQDINEALLLETEKEFKEKGYQAVAYKSDVSKKKEQEELVQFAVTEFGQLDVMVNNAGVDAVTPILEIGEEELSKLFNINVFGTLFGIQAAANQFIKQKSKGKIINACSIAGHESYEVLGTYSATKHSVRSFTQTAAKELADKGITVNAYCPGVAKTEMWDRIDEEMVKLDDSLEIGDAFEAFSSEIKLGRYQEPSDVANLVSFLASNDSDYITGQSILTDGGLVYR</sequence>
<feature type="chain" id="PRO_0000054545" description="Diacetyl reductase [(S)-acetoin forming]">
    <location>
        <begin position="1"/>
        <end position="257"/>
    </location>
</feature>
<feature type="active site" description="Proton acceptor" evidence="2">
    <location>
        <position position="152"/>
    </location>
</feature>
<feature type="active site" evidence="1">
    <location>
        <position position="156"/>
    </location>
</feature>
<feature type="binding site" evidence="1">
    <location>
        <begin position="6"/>
        <end position="30"/>
    </location>
    <ligand>
        <name>NAD(+)</name>
        <dbReference type="ChEBI" id="CHEBI:57540"/>
    </ligand>
</feature>
<feature type="binding site" evidence="1">
    <location>
        <position position="139"/>
    </location>
    <ligand>
        <name>substrate</name>
    </ligand>
</feature>
<organism>
    <name type="scientific">Staphylococcus epidermidis (strain ATCC 12228 / FDA PCI 1200)</name>
    <dbReference type="NCBI Taxonomy" id="176280"/>
    <lineage>
        <taxon>Bacteria</taxon>
        <taxon>Bacillati</taxon>
        <taxon>Bacillota</taxon>
        <taxon>Bacilli</taxon>
        <taxon>Bacillales</taxon>
        <taxon>Staphylococcaceae</taxon>
        <taxon>Staphylococcus</taxon>
    </lineage>
</organism>
<name>BUTA_STAES</name>